<protein>
    <recommendedName>
        <fullName>Probable RNA-dependent RNA polymerase 3</fullName>
        <shortName>AtRDRP3</shortName>
        <ecNumber>2.7.7.48</ecNumber>
    </recommendedName>
    <alternativeName>
        <fullName>RNA-directed RNA polymerase 3</fullName>
    </alternativeName>
</protein>
<dbReference type="EC" id="2.7.7.48"/>
<dbReference type="EMBL" id="AC005169">
    <property type="protein sequence ID" value="AAC62125.1"/>
    <property type="status" value="ALT_SEQ"/>
    <property type="molecule type" value="Genomic_DNA"/>
</dbReference>
<dbReference type="EMBL" id="CP002685">
    <property type="protein sequence ID" value="AEC06942.1"/>
    <property type="molecule type" value="Genomic_DNA"/>
</dbReference>
<dbReference type="PIR" id="F84582">
    <property type="entry name" value="F84582"/>
</dbReference>
<dbReference type="RefSeq" id="NP_179581.2">
    <property type="nucleotide sequence ID" value="NM_127549.3"/>
</dbReference>
<dbReference type="SMR" id="O82190"/>
<dbReference type="FunCoup" id="O82190">
    <property type="interactions" value="1"/>
</dbReference>
<dbReference type="STRING" id="3702.O82190"/>
<dbReference type="PaxDb" id="3702-AT2G19910.1"/>
<dbReference type="EnsemblPlants" id="AT2G19910.1">
    <property type="protein sequence ID" value="AT2G19910.1"/>
    <property type="gene ID" value="AT2G19910"/>
</dbReference>
<dbReference type="GeneID" id="816510"/>
<dbReference type="Gramene" id="AT2G19910.1">
    <property type="protein sequence ID" value="AT2G19910.1"/>
    <property type="gene ID" value="AT2G19910"/>
</dbReference>
<dbReference type="KEGG" id="ath:AT2G19910"/>
<dbReference type="Araport" id="AT2G19910"/>
<dbReference type="TAIR" id="AT2G19910"/>
<dbReference type="eggNOG" id="KOG0988">
    <property type="taxonomic scope" value="Eukaryota"/>
</dbReference>
<dbReference type="HOGENOM" id="CLU_008367_0_0_1"/>
<dbReference type="InParanoid" id="O82190"/>
<dbReference type="OrthoDB" id="6513042at2759"/>
<dbReference type="PhylomeDB" id="O82190"/>
<dbReference type="PRO" id="PR:O82190"/>
<dbReference type="Proteomes" id="UP000006548">
    <property type="component" value="Chromosome 2"/>
</dbReference>
<dbReference type="ExpressionAtlas" id="O82190">
    <property type="expression patterns" value="baseline and differential"/>
</dbReference>
<dbReference type="GO" id="GO:0003723">
    <property type="term" value="F:RNA binding"/>
    <property type="evidence" value="ECO:0007669"/>
    <property type="project" value="UniProtKB-KW"/>
</dbReference>
<dbReference type="GO" id="GO:0003968">
    <property type="term" value="F:RNA-directed RNA polymerase activity"/>
    <property type="evidence" value="ECO:0007669"/>
    <property type="project" value="UniProtKB-KW"/>
</dbReference>
<dbReference type="GO" id="GO:0031047">
    <property type="term" value="P:regulatory ncRNA-mediated gene silencing"/>
    <property type="evidence" value="ECO:0007669"/>
    <property type="project" value="UniProtKB-KW"/>
</dbReference>
<dbReference type="InterPro" id="IPR007855">
    <property type="entry name" value="RNA-dep_RNA_pol_euk-typ"/>
</dbReference>
<dbReference type="PANTHER" id="PTHR23079">
    <property type="entry name" value="RNA-DEPENDENT RNA POLYMERASE"/>
    <property type="match status" value="1"/>
</dbReference>
<dbReference type="PANTHER" id="PTHR23079:SF56">
    <property type="entry name" value="RNA-DEPENDENT RNA POLYMERASE 3-RELATED"/>
    <property type="match status" value="1"/>
</dbReference>
<dbReference type="Pfam" id="PF05183">
    <property type="entry name" value="RdRP"/>
    <property type="match status" value="1"/>
</dbReference>
<comment type="function">
    <text evidence="1">Probably involved in the RNA silencing pathway and required for the generation of small interfering RNAs (siRNAs).</text>
</comment>
<comment type="catalytic activity">
    <reaction>
        <text>RNA(n) + a ribonucleoside 5'-triphosphate = RNA(n+1) + diphosphate</text>
        <dbReference type="Rhea" id="RHEA:21248"/>
        <dbReference type="Rhea" id="RHEA-COMP:14527"/>
        <dbReference type="Rhea" id="RHEA-COMP:17342"/>
        <dbReference type="ChEBI" id="CHEBI:33019"/>
        <dbReference type="ChEBI" id="CHEBI:61557"/>
        <dbReference type="ChEBI" id="CHEBI:140395"/>
        <dbReference type="EC" id="2.7.7.48"/>
    </reaction>
</comment>
<comment type="similarity">
    <text evidence="3">Belongs to the RdRP family.</text>
</comment>
<comment type="sequence caution" evidence="3">
    <conflict type="erroneous gene model prediction">
        <sequence resource="EMBL-CDS" id="AAC62125"/>
    </conflict>
</comment>
<gene>
    <name type="primary">RDR3</name>
    <name type="synonym">RDRP3</name>
    <name type="ordered locus">At2g19910</name>
    <name type="ORF">F6F22.6</name>
</gene>
<feature type="chain" id="PRO_0000404674" description="Probable RNA-dependent RNA polymerase 3">
    <location>
        <begin position="1"/>
        <end position="992"/>
    </location>
</feature>
<feature type="region of interest" description="Disordered" evidence="2">
    <location>
        <begin position="88"/>
        <end position="113"/>
    </location>
</feature>
<accession>O82190</accession>
<organism>
    <name type="scientific">Arabidopsis thaliana</name>
    <name type="common">Mouse-ear cress</name>
    <dbReference type="NCBI Taxonomy" id="3702"/>
    <lineage>
        <taxon>Eukaryota</taxon>
        <taxon>Viridiplantae</taxon>
        <taxon>Streptophyta</taxon>
        <taxon>Embryophyta</taxon>
        <taxon>Tracheophyta</taxon>
        <taxon>Spermatophyta</taxon>
        <taxon>Magnoliopsida</taxon>
        <taxon>eudicotyledons</taxon>
        <taxon>Gunneridae</taxon>
        <taxon>Pentapetalae</taxon>
        <taxon>rosids</taxon>
        <taxon>malvids</taxon>
        <taxon>Brassicales</taxon>
        <taxon>Brassicaceae</taxon>
        <taxon>Camelineae</taxon>
        <taxon>Arabidopsis</taxon>
    </lineage>
</organism>
<reference key="1">
    <citation type="journal article" date="1999" name="Nature">
        <title>Sequence and analysis of chromosome 2 of the plant Arabidopsis thaliana.</title>
        <authorList>
            <person name="Lin X."/>
            <person name="Kaul S."/>
            <person name="Rounsley S.D."/>
            <person name="Shea T.P."/>
            <person name="Benito M.-I."/>
            <person name="Town C.D."/>
            <person name="Fujii C.Y."/>
            <person name="Mason T.M."/>
            <person name="Bowman C.L."/>
            <person name="Barnstead M.E."/>
            <person name="Feldblyum T.V."/>
            <person name="Buell C.R."/>
            <person name="Ketchum K.A."/>
            <person name="Lee J.J."/>
            <person name="Ronning C.M."/>
            <person name="Koo H.L."/>
            <person name="Moffat K.S."/>
            <person name="Cronin L.A."/>
            <person name="Shen M."/>
            <person name="Pai G."/>
            <person name="Van Aken S."/>
            <person name="Umayam L."/>
            <person name="Tallon L.J."/>
            <person name="Gill J.E."/>
            <person name="Adams M.D."/>
            <person name="Carrera A.J."/>
            <person name="Creasy T.H."/>
            <person name="Goodman H.M."/>
            <person name="Somerville C.R."/>
            <person name="Copenhaver G.P."/>
            <person name="Preuss D."/>
            <person name="Nierman W.C."/>
            <person name="White O."/>
            <person name="Eisen J.A."/>
            <person name="Salzberg S.L."/>
            <person name="Fraser C.M."/>
            <person name="Venter J.C."/>
        </authorList>
    </citation>
    <scope>NUCLEOTIDE SEQUENCE [LARGE SCALE GENOMIC DNA]</scope>
    <source>
        <strain>cv. Columbia</strain>
    </source>
</reference>
<reference key="2">
    <citation type="journal article" date="2017" name="Plant J.">
        <title>Araport11: a complete reannotation of the Arabidopsis thaliana reference genome.</title>
        <authorList>
            <person name="Cheng C.Y."/>
            <person name="Krishnakumar V."/>
            <person name="Chan A.P."/>
            <person name="Thibaud-Nissen F."/>
            <person name="Schobel S."/>
            <person name="Town C.D."/>
        </authorList>
    </citation>
    <scope>GENOME REANNOTATION</scope>
    <source>
        <strain>cv. Columbia</strain>
    </source>
</reference>
<evidence type="ECO:0000250" key="1"/>
<evidence type="ECO:0000256" key="2">
    <source>
        <dbReference type="SAM" id="MobiDB-lite"/>
    </source>
</evidence>
<evidence type="ECO:0000305" key="3"/>
<proteinExistence type="inferred from homology"/>
<name>RDR3_ARATH</name>
<sequence length="992" mass="112759">MMNNGCDEVSPRSEIALLGSVETMLEKIYEKHNHRLPISVETRRKLSSISEELALETLRKVFNKPYLKTLDGLIMYFVKGTVTVDGSPRLSPGESPVQSPRTPAKKSCRASQDVSLDLETPSPKFMKREENGGSKYIPPLLALGELEFKKAFLLLSYIGGESLVEEVISGDQIRKWKDLPMVSYEAAVWNRLGQRYCSPKERRRPLEGDSGMTHYYQCHVATDGSYKFKGHLLENTGTHLHKVLGDDNVLTVKFDKVLGVETYCNDLYSTYKGIAKNGIMVGLRRYRFFVFKDGGKEEKKKDVSTKGVKCYFIRTDSTASIDMQNPYIFAGKSMHEARMHFMHVNTLSSLPNYMSRFSLILSKTKTLEVDMTGITFEQIDDIHCHDQDDKDVLDKNGKPCIHSDGTGYISEDLARMCPVNIFKGKSMRSNNIQSKNLNFEGQGPCGQEPPLLIQFRIFYNGYAVKGTFLTNKKLPPRTVQVRPSMIKVYEDRTLSNLSTFNSLEVVTTSNPPRKARLSRNLVALLSYGGVPNDFFLNILRNTLEESKTIFYSERAAFKAAINYGDDQYTADMILVGIPLDEPYLKDRLSYLLKTERNALKAGRFPIDESYYIMGTVDPTGELKENEICVILHSGQISGDVLVYRNPGLHFGDIHVLKATYVKALEDYVGNAKFAVFFPQKGPRSLGDEIAGGDFDGDMYFISRNPKLLEHFKPSEPWVSSSKPSKIYCGRKPSELSEEELEEELFKMFLKARFCKRDVIGMAADCWLGIMDPFLTLGDESAKEKYERKKNILKLIDIYYDALDAPKKGAKVDLPPDLEIKNFPHYMERDPKRDFRSTSILGLIFDTVDSHNAEEPPPSEISKLWYFEDEPVPKSHMDKFTSWYENYRSEMSQAMMETDKVKRNQLTNEVIQRYKQDFYGAAGFEDSNKSLEELYPQALALYNVVYDYAIQEGVAKCTFAWNVAGPVLCKFYLKKTKDKSVVASTSVLKKLLG</sequence>
<keyword id="KW-0548">Nucleotidyltransferase</keyword>
<keyword id="KW-1185">Reference proteome</keyword>
<keyword id="KW-0694">RNA-binding</keyword>
<keyword id="KW-0696">RNA-directed RNA polymerase</keyword>
<keyword id="KW-0943">RNA-mediated gene silencing</keyword>
<keyword id="KW-0808">Transferase</keyword>